<sequence length="436" mass="47539">MMATQTLSIDSYQDGQQMQVVTELKTEQDPNCSDPDAEGVSPPPIESQTPMDADKQAIYRHPLFPLLALLFEKCEQSTQGSEGTTSASFDVDIENFVRKQEKDGKPFFCEDPETDNLMVKAIQVLRIHLLELEKVNELCKDFCSRYIACLKTKMNSETLLSGEPGSPYSPVQSQQIQSAITGTLSPQGIVVPASALQQGNVTMATVAGGTVYQPVTVVTPQGQVVTQALSPGTIRIQNSQLQLQLNQDLSILHQEDGSSKNKRGVLPKHATNVMRSWLFQHIGHPYPTEDEKKQIAAQTNLTLLQVNNWFINARRRILQPMLDSSCSETPKTKKKPAQNRPVQRFWPDSLASGVAQATPSELAMSEGAVVTITTPVNMNVDSLQSLSSDGATLAVQQVMMAGQSEDESVDSTEDEGGALAPTHISGLVLENSDSLQ</sequence>
<dbReference type="EMBL" id="AF061270">
    <property type="protein sequence ID" value="AAC15990.1"/>
    <property type="status" value="ALT_INIT"/>
    <property type="molecule type" value="mRNA"/>
</dbReference>
<dbReference type="EMBL" id="AK131788">
    <property type="protein sequence ID" value="BAE20805.1"/>
    <property type="molecule type" value="mRNA"/>
</dbReference>
<dbReference type="EMBL" id="AK134000">
    <property type="protein sequence ID" value="BAE21975.1"/>
    <property type="molecule type" value="mRNA"/>
</dbReference>
<dbReference type="EMBL" id="BC052701">
    <property type="protein sequence ID" value="AAH52701.1"/>
    <property type="molecule type" value="mRNA"/>
</dbReference>
<dbReference type="CCDS" id="CCDS28608.1"/>
<dbReference type="RefSeq" id="NP_001398385.1">
    <property type="nucleotide sequence ID" value="NM_001411456.1"/>
</dbReference>
<dbReference type="RefSeq" id="NP_001398386.1">
    <property type="nucleotide sequence ID" value="NM_001411457.1"/>
</dbReference>
<dbReference type="RefSeq" id="NP_001398387.1">
    <property type="nucleotide sequence ID" value="NM_001411458.1"/>
</dbReference>
<dbReference type="RefSeq" id="NP_001398388.1">
    <property type="nucleotide sequence ID" value="NM_001411459.1"/>
</dbReference>
<dbReference type="RefSeq" id="NP_001398793.1">
    <property type="nucleotide sequence ID" value="NM_001411864.1"/>
</dbReference>
<dbReference type="RefSeq" id="NP_057879.2">
    <property type="nucleotide sequence ID" value="NM_016670.3"/>
</dbReference>
<dbReference type="RefSeq" id="XP_006523917.1">
    <property type="nucleotide sequence ID" value="XM_006523854.2"/>
</dbReference>
<dbReference type="RefSeq" id="XP_006523918.1">
    <property type="nucleotide sequence ID" value="XM_006523855.2"/>
</dbReference>
<dbReference type="SMR" id="O70477"/>
<dbReference type="BioGRID" id="202211">
    <property type="interactions" value="12"/>
</dbReference>
<dbReference type="CORUM" id="O70477"/>
<dbReference type="FunCoup" id="O70477">
    <property type="interactions" value="4040"/>
</dbReference>
<dbReference type="IntAct" id="O70477">
    <property type="interactions" value="3"/>
</dbReference>
<dbReference type="STRING" id="10090.ENSMUSP00000094966"/>
<dbReference type="GlyGen" id="O70477">
    <property type="glycosylation" value="1 site"/>
</dbReference>
<dbReference type="iPTMnet" id="O70477"/>
<dbReference type="PhosphoSitePlus" id="O70477"/>
<dbReference type="PaxDb" id="10090-ENSMUSP00000094966"/>
<dbReference type="PeptideAtlas" id="O70477"/>
<dbReference type="ProteomicsDB" id="289607"/>
<dbReference type="Antibodypedia" id="3800">
    <property type="antibodies" value="237 antibodies from 29 providers"/>
</dbReference>
<dbReference type="DNASU" id="18771"/>
<dbReference type="Ensembl" id="ENSMUST00000097352.11">
    <property type="protein sequence ID" value="ENSMUSP00000094966.4"/>
    <property type="gene ID" value="ENSMUSG00000006705.14"/>
</dbReference>
<dbReference type="Ensembl" id="ENSMUST00000175806.9">
    <property type="protein sequence ID" value="ENSMUSP00000134852.2"/>
    <property type="gene ID" value="ENSMUSG00000006705.14"/>
</dbReference>
<dbReference type="Ensembl" id="ENSMUST00000176701.4">
    <property type="protein sequence ID" value="ENSMUSP00000135804.2"/>
    <property type="gene ID" value="ENSMUSG00000006705.14"/>
</dbReference>
<dbReference type="GeneID" id="18771"/>
<dbReference type="KEGG" id="mmu:18771"/>
<dbReference type="UCSC" id="uc008bvh.2">
    <property type="organism name" value="mouse"/>
</dbReference>
<dbReference type="AGR" id="MGI:1201409"/>
<dbReference type="CTD" id="5316"/>
<dbReference type="MGI" id="MGI:1201409">
    <property type="gene designation" value="Pknox1"/>
</dbReference>
<dbReference type="VEuPathDB" id="HostDB:ENSMUSG00000006705"/>
<dbReference type="eggNOG" id="KOG0773">
    <property type="taxonomic scope" value="Eukaryota"/>
</dbReference>
<dbReference type="GeneTree" id="ENSGT00940000159505"/>
<dbReference type="HOGENOM" id="CLU_023139_0_2_1"/>
<dbReference type="InParanoid" id="O70477"/>
<dbReference type="OMA" id="QHVTMPD"/>
<dbReference type="OrthoDB" id="10056939at2759"/>
<dbReference type="PhylomeDB" id="O70477"/>
<dbReference type="TreeFam" id="TF318093"/>
<dbReference type="BioGRID-ORCS" id="18771">
    <property type="hits" value="8 hits in 80 CRISPR screens"/>
</dbReference>
<dbReference type="ChiTaRS" id="Pknox1">
    <property type="organism name" value="mouse"/>
</dbReference>
<dbReference type="PRO" id="PR:O70477"/>
<dbReference type="Proteomes" id="UP000000589">
    <property type="component" value="Chromosome 17"/>
</dbReference>
<dbReference type="RNAct" id="O70477">
    <property type="molecule type" value="protein"/>
</dbReference>
<dbReference type="Bgee" id="ENSMUSG00000006705">
    <property type="expression patterns" value="Expressed in rostral migratory stream and 258 other cell types or tissues"/>
</dbReference>
<dbReference type="ExpressionAtlas" id="O70477">
    <property type="expression patterns" value="baseline and differential"/>
</dbReference>
<dbReference type="GO" id="GO:0005737">
    <property type="term" value="C:cytoplasm"/>
    <property type="evidence" value="ECO:0000314"/>
    <property type="project" value="MGI"/>
</dbReference>
<dbReference type="GO" id="GO:0005654">
    <property type="term" value="C:nucleoplasm"/>
    <property type="evidence" value="ECO:0000304"/>
    <property type="project" value="Reactome"/>
</dbReference>
<dbReference type="GO" id="GO:0005634">
    <property type="term" value="C:nucleus"/>
    <property type="evidence" value="ECO:0000314"/>
    <property type="project" value="MGI"/>
</dbReference>
<dbReference type="GO" id="GO:0005667">
    <property type="term" value="C:transcription regulator complex"/>
    <property type="evidence" value="ECO:0000314"/>
    <property type="project" value="MGI"/>
</dbReference>
<dbReference type="GO" id="GO:0003682">
    <property type="term" value="F:chromatin binding"/>
    <property type="evidence" value="ECO:0000314"/>
    <property type="project" value="MGI"/>
</dbReference>
<dbReference type="GO" id="GO:0003677">
    <property type="term" value="F:DNA binding"/>
    <property type="evidence" value="ECO:0000314"/>
    <property type="project" value="MGI"/>
</dbReference>
<dbReference type="GO" id="GO:0000981">
    <property type="term" value="F:DNA-binding transcription factor activity, RNA polymerase II-specific"/>
    <property type="evidence" value="ECO:0000314"/>
    <property type="project" value="MGI"/>
</dbReference>
<dbReference type="GO" id="GO:0000978">
    <property type="term" value="F:RNA polymerase II cis-regulatory region sequence-specific DNA binding"/>
    <property type="evidence" value="ECO:0000314"/>
    <property type="project" value="MGI"/>
</dbReference>
<dbReference type="GO" id="GO:0043565">
    <property type="term" value="F:sequence-specific DNA binding"/>
    <property type="evidence" value="ECO:0000314"/>
    <property type="project" value="BHF-UCL"/>
</dbReference>
<dbReference type="GO" id="GO:0001525">
    <property type="term" value="P:angiogenesis"/>
    <property type="evidence" value="ECO:0000315"/>
    <property type="project" value="MGI"/>
</dbReference>
<dbReference type="GO" id="GO:0043010">
    <property type="term" value="P:camera-type eye development"/>
    <property type="evidence" value="ECO:0000315"/>
    <property type="project" value="MGI"/>
</dbReference>
<dbReference type="GO" id="GO:0030218">
    <property type="term" value="P:erythrocyte differentiation"/>
    <property type="evidence" value="ECO:0000315"/>
    <property type="project" value="MGI"/>
</dbReference>
<dbReference type="GO" id="GO:0030097">
    <property type="term" value="P:hemopoiesis"/>
    <property type="evidence" value="ECO:0000315"/>
    <property type="project" value="MGI"/>
</dbReference>
<dbReference type="GO" id="GO:0045893">
    <property type="term" value="P:positive regulation of DNA-templated transcription"/>
    <property type="evidence" value="ECO:0000304"/>
    <property type="project" value="BHF-UCL"/>
</dbReference>
<dbReference type="GO" id="GO:0045944">
    <property type="term" value="P:positive regulation of transcription by RNA polymerase II"/>
    <property type="evidence" value="ECO:0000314"/>
    <property type="project" value="MGI"/>
</dbReference>
<dbReference type="GO" id="GO:0006357">
    <property type="term" value="P:regulation of transcription by RNA polymerase II"/>
    <property type="evidence" value="ECO:0000314"/>
    <property type="project" value="MGI"/>
</dbReference>
<dbReference type="GO" id="GO:0030217">
    <property type="term" value="P:T cell differentiation"/>
    <property type="evidence" value="ECO:0000315"/>
    <property type="project" value="MGI"/>
</dbReference>
<dbReference type="CDD" id="cd00086">
    <property type="entry name" value="homeodomain"/>
    <property type="match status" value="1"/>
</dbReference>
<dbReference type="FunFam" id="1.10.10.60:FF:000004">
    <property type="entry name" value="Meis2 homeobox isoform 2c"/>
    <property type="match status" value="1"/>
</dbReference>
<dbReference type="Gene3D" id="1.10.10.60">
    <property type="entry name" value="Homeodomain-like"/>
    <property type="match status" value="1"/>
</dbReference>
<dbReference type="InterPro" id="IPR001356">
    <property type="entry name" value="HD"/>
</dbReference>
<dbReference type="InterPro" id="IPR009057">
    <property type="entry name" value="Homeodomain-like_sf"/>
</dbReference>
<dbReference type="InterPro" id="IPR008422">
    <property type="entry name" value="KN_HD"/>
</dbReference>
<dbReference type="InterPro" id="IPR032453">
    <property type="entry name" value="PKNOX/Meis_N"/>
</dbReference>
<dbReference type="InterPro" id="IPR050224">
    <property type="entry name" value="TALE_homeobox"/>
</dbReference>
<dbReference type="PANTHER" id="PTHR11850">
    <property type="entry name" value="HOMEOBOX PROTEIN TRANSCRIPTION FACTORS"/>
    <property type="match status" value="1"/>
</dbReference>
<dbReference type="Pfam" id="PF05920">
    <property type="entry name" value="Homeobox_KN"/>
    <property type="match status" value="1"/>
</dbReference>
<dbReference type="Pfam" id="PF16493">
    <property type="entry name" value="Meis_PKNOX_N"/>
    <property type="match status" value="1"/>
</dbReference>
<dbReference type="SMART" id="SM00389">
    <property type="entry name" value="HOX"/>
    <property type="match status" value="1"/>
</dbReference>
<dbReference type="SUPFAM" id="SSF46689">
    <property type="entry name" value="Homeodomain-like"/>
    <property type="match status" value="1"/>
</dbReference>
<dbReference type="PROSITE" id="PS50071">
    <property type="entry name" value="HOMEOBOX_2"/>
    <property type="match status" value="1"/>
</dbReference>
<feature type="chain" id="PRO_0000049249" description="Homeobox protein PKNOX1">
    <location>
        <begin position="1"/>
        <end position="436"/>
    </location>
</feature>
<feature type="domain" description="MEIS N-terminal" evidence="2">
    <location>
        <begin position="80"/>
        <end position="163"/>
    </location>
</feature>
<feature type="DNA-binding region" description="Homeobox; TALE-type" evidence="3">
    <location>
        <begin position="259"/>
        <end position="321"/>
    </location>
</feature>
<feature type="region of interest" description="Disordered" evidence="4">
    <location>
        <begin position="23"/>
        <end position="50"/>
    </location>
</feature>
<feature type="region of interest" description="Disordered" evidence="4">
    <location>
        <begin position="401"/>
        <end position="436"/>
    </location>
</feature>
<feature type="compositionally biased region" description="Acidic residues" evidence="4">
    <location>
        <begin position="404"/>
        <end position="416"/>
    </location>
</feature>
<feature type="modified residue" description="Phosphoserine" evidence="10">
    <location>
        <position position="33"/>
    </location>
</feature>
<feature type="modified residue" description="Phosphoserine" evidence="1">
    <location>
        <position position="41"/>
    </location>
</feature>
<feature type="sequence conflict" description="In Ref. 1; AAC15990." evidence="8" ref="1">
    <original>I</original>
    <variation>T</variation>
    <location>
        <position position="251"/>
    </location>
</feature>
<comment type="function">
    <text evidence="6">Activates transcription in the presence of PBX1A and HOXA1.</text>
</comment>
<comment type="function">
    <text evidence="5">(Microbial infection) In complex with PBX1, binds to the 5'-TGATTGAC-3' consensus sequence in the U5 region of Moloney murine leukemia virus and promotes viral transcription.</text>
</comment>
<comment type="subunit">
    <text evidence="1">Interacts with MN1.</text>
</comment>
<comment type="subcellular location">
    <subcellularLocation>
        <location evidence="8">Nucleus</location>
    </subcellularLocation>
</comment>
<comment type="similarity">
    <text evidence="8">Belongs to the TALE/MEIS homeobox family.</text>
</comment>
<comment type="sequence caution" evidence="8">
    <conflict type="erroneous initiation">
        <sequence resource="EMBL-CDS" id="AAC15990"/>
    </conflict>
</comment>
<keyword id="KW-0010">Activator</keyword>
<keyword id="KW-0238">DNA-binding</keyword>
<keyword id="KW-0371">Homeobox</keyword>
<keyword id="KW-0539">Nucleus</keyword>
<keyword id="KW-0597">Phosphoprotein</keyword>
<keyword id="KW-1185">Reference proteome</keyword>
<keyword id="KW-0804">Transcription</keyword>
<keyword id="KW-0805">Transcription regulation</keyword>
<name>PKNX1_MOUSE</name>
<gene>
    <name evidence="9" type="primary">Pknox1</name>
    <name evidence="7" type="synonym">Prep1</name>
</gene>
<organism>
    <name type="scientific">Mus musculus</name>
    <name type="common">Mouse</name>
    <dbReference type="NCBI Taxonomy" id="10090"/>
    <lineage>
        <taxon>Eukaryota</taxon>
        <taxon>Metazoa</taxon>
        <taxon>Chordata</taxon>
        <taxon>Craniata</taxon>
        <taxon>Vertebrata</taxon>
        <taxon>Euteleostomi</taxon>
        <taxon>Mammalia</taxon>
        <taxon>Eutheria</taxon>
        <taxon>Euarchontoglires</taxon>
        <taxon>Glires</taxon>
        <taxon>Rodentia</taxon>
        <taxon>Myomorpha</taxon>
        <taxon>Muroidea</taxon>
        <taxon>Muridae</taxon>
        <taxon>Murinae</taxon>
        <taxon>Mus</taxon>
        <taxon>Mus</taxon>
    </lineage>
</organism>
<proteinExistence type="evidence at protein level"/>
<protein>
    <recommendedName>
        <fullName>Homeobox protein PKNOX1</fullName>
    </recommendedName>
    <alternativeName>
        <fullName>PBX/knotted homeobox 1</fullName>
    </alternativeName>
</protein>
<accession>O70477</accession>
<accession>Q7TT01</accession>
<evidence type="ECO:0000250" key="1">
    <source>
        <dbReference type="UniProtKB" id="P55347"/>
    </source>
</evidence>
<evidence type="ECO:0000255" key="2"/>
<evidence type="ECO:0000255" key="3">
    <source>
        <dbReference type="PROSITE-ProRule" id="PRU00108"/>
    </source>
</evidence>
<evidence type="ECO:0000256" key="4">
    <source>
        <dbReference type="SAM" id="MobiDB-lite"/>
    </source>
</evidence>
<evidence type="ECO:0000269" key="5">
    <source>
    </source>
</evidence>
<evidence type="ECO:0000269" key="6">
    <source>
    </source>
</evidence>
<evidence type="ECO:0000303" key="7">
    <source>
    </source>
</evidence>
<evidence type="ECO:0000305" key="8"/>
<evidence type="ECO:0000312" key="9">
    <source>
        <dbReference type="MGI" id="MGI:1201409"/>
    </source>
</evidence>
<evidence type="ECO:0007744" key="10">
    <source>
    </source>
</evidence>
<reference key="1">
    <citation type="submission" date="1998-04" db="EMBL/GenBank/DDBJ databases">
        <title>Isolation of the mouse Pknox1 homeobox gene.</title>
        <authorList>
            <person name="Nakamura T."/>
            <person name="Yamazaki Y."/>
        </authorList>
    </citation>
    <scope>NUCLEOTIDE SEQUENCE [MRNA]</scope>
    <source>
        <strain>Swiss Webster</strain>
    </source>
</reference>
<reference key="2">
    <citation type="journal article" date="2005" name="Science">
        <title>The transcriptional landscape of the mammalian genome.</title>
        <authorList>
            <person name="Carninci P."/>
            <person name="Kasukawa T."/>
            <person name="Katayama S."/>
            <person name="Gough J."/>
            <person name="Frith M.C."/>
            <person name="Maeda N."/>
            <person name="Oyama R."/>
            <person name="Ravasi T."/>
            <person name="Lenhard B."/>
            <person name="Wells C."/>
            <person name="Kodzius R."/>
            <person name="Shimokawa K."/>
            <person name="Bajic V.B."/>
            <person name="Brenner S.E."/>
            <person name="Batalov S."/>
            <person name="Forrest A.R."/>
            <person name="Zavolan M."/>
            <person name="Davis M.J."/>
            <person name="Wilming L.G."/>
            <person name="Aidinis V."/>
            <person name="Allen J.E."/>
            <person name="Ambesi-Impiombato A."/>
            <person name="Apweiler R."/>
            <person name="Aturaliya R.N."/>
            <person name="Bailey T.L."/>
            <person name="Bansal M."/>
            <person name="Baxter L."/>
            <person name="Beisel K.W."/>
            <person name="Bersano T."/>
            <person name="Bono H."/>
            <person name="Chalk A.M."/>
            <person name="Chiu K.P."/>
            <person name="Choudhary V."/>
            <person name="Christoffels A."/>
            <person name="Clutterbuck D.R."/>
            <person name="Crowe M.L."/>
            <person name="Dalla E."/>
            <person name="Dalrymple B.P."/>
            <person name="de Bono B."/>
            <person name="Della Gatta G."/>
            <person name="di Bernardo D."/>
            <person name="Down T."/>
            <person name="Engstrom P."/>
            <person name="Fagiolini M."/>
            <person name="Faulkner G."/>
            <person name="Fletcher C.F."/>
            <person name="Fukushima T."/>
            <person name="Furuno M."/>
            <person name="Futaki S."/>
            <person name="Gariboldi M."/>
            <person name="Georgii-Hemming P."/>
            <person name="Gingeras T.R."/>
            <person name="Gojobori T."/>
            <person name="Green R.E."/>
            <person name="Gustincich S."/>
            <person name="Harbers M."/>
            <person name="Hayashi Y."/>
            <person name="Hensch T.K."/>
            <person name="Hirokawa N."/>
            <person name="Hill D."/>
            <person name="Huminiecki L."/>
            <person name="Iacono M."/>
            <person name="Ikeo K."/>
            <person name="Iwama A."/>
            <person name="Ishikawa T."/>
            <person name="Jakt M."/>
            <person name="Kanapin A."/>
            <person name="Katoh M."/>
            <person name="Kawasawa Y."/>
            <person name="Kelso J."/>
            <person name="Kitamura H."/>
            <person name="Kitano H."/>
            <person name="Kollias G."/>
            <person name="Krishnan S.P."/>
            <person name="Kruger A."/>
            <person name="Kummerfeld S.K."/>
            <person name="Kurochkin I.V."/>
            <person name="Lareau L.F."/>
            <person name="Lazarevic D."/>
            <person name="Lipovich L."/>
            <person name="Liu J."/>
            <person name="Liuni S."/>
            <person name="McWilliam S."/>
            <person name="Madan Babu M."/>
            <person name="Madera M."/>
            <person name="Marchionni L."/>
            <person name="Matsuda H."/>
            <person name="Matsuzawa S."/>
            <person name="Miki H."/>
            <person name="Mignone F."/>
            <person name="Miyake S."/>
            <person name="Morris K."/>
            <person name="Mottagui-Tabar S."/>
            <person name="Mulder N."/>
            <person name="Nakano N."/>
            <person name="Nakauchi H."/>
            <person name="Ng P."/>
            <person name="Nilsson R."/>
            <person name="Nishiguchi S."/>
            <person name="Nishikawa S."/>
            <person name="Nori F."/>
            <person name="Ohara O."/>
            <person name="Okazaki Y."/>
            <person name="Orlando V."/>
            <person name="Pang K.C."/>
            <person name="Pavan W.J."/>
            <person name="Pavesi G."/>
            <person name="Pesole G."/>
            <person name="Petrovsky N."/>
            <person name="Piazza S."/>
            <person name="Reed J."/>
            <person name="Reid J.F."/>
            <person name="Ring B.Z."/>
            <person name="Ringwald M."/>
            <person name="Rost B."/>
            <person name="Ruan Y."/>
            <person name="Salzberg S.L."/>
            <person name="Sandelin A."/>
            <person name="Schneider C."/>
            <person name="Schoenbach C."/>
            <person name="Sekiguchi K."/>
            <person name="Semple C.A."/>
            <person name="Seno S."/>
            <person name="Sessa L."/>
            <person name="Sheng Y."/>
            <person name="Shibata Y."/>
            <person name="Shimada H."/>
            <person name="Shimada K."/>
            <person name="Silva D."/>
            <person name="Sinclair B."/>
            <person name="Sperling S."/>
            <person name="Stupka E."/>
            <person name="Sugiura K."/>
            <person name="Sultana R."/>
            <person name="Takenaka Y."/>
            <person name="Taki K."/>
            <person name="Tammoja K."/>
            <person name="Tan S.L."/>
            <person name="Tang S."/>
            <person name="Taylor M.S."/>
            <person name="Tegner J."/>
            <person name="Teichmann S.A."/>
            <person name="Ueda H.R."/>
            <person name="van Nimwegen E."/>
            <person name="Verardo R."/>
            <person name="Wei C.L."/>
            <person name="Yagi K."/>
            <person name="Yamanishi H."/>
            <person name="Zabarovsky E."/>
            <person name="Zhu S."/>
            <person name="Zimmer A."/>
            <person name="Hide W."/>
            <person name="Bult C."/>
            <person name="Grimmond S.M."/>
            <person name="Teasdale R.D."/>
            <person name="Liu E.T."/>
            <person name="Brusic V."/>
            <person name="Quackenbush J."/>
            <person name="Wahlestedt C."/>
            <person name="Mattick J.S."/>
            <person name="Hume D.A."/>
            <person name="Kai C."/>
            <person name="Sasaki D."/>
            <person name="Tomaru Y."/>
            <person name="Fukuda S."/>
            <person name="Kanamori-Katayama M."/>
            <person name="Suzuki M."/>
            <person name="Aoki J."/>
            <person name="Arakawa T."/>
            <person name="Iida J."/>
            <person name="Imamura K."/>
            <person name="Itoh M."/>
            <person name="Kato T."/>
            <person name="Kawaji H."/>
            <person name="Kawagashira N."/>
            <person name="Kawashima T."/>
            <person name="Kojima M."/>
            <person name="Kondo S."/>
            <person name="Konno H."/>
            <person name="Nakano K."/>
            <person name="Ninomiya N."/>
            <person name="Nishio T."/>
            <person name="Okada M."/>
            <person name="Plessy C."/>
            <person name="Shibata K."/>
            <person name="Shiraki T."/>
            <person name="Suzuki S."/>
            <person name="Tagami M."/>
            <person name="Waki K."/>
            <person name="Watahiki A."/>
            <person name="Okamura-Oho Y."/>
            <person name="Suzuki H."/>
            <person name="Kawai J."/>
            <person name="Hayashizaki Y."/>
        </authorList>
    </citation>
    <scope>NUCLEOTIDE SEQUENCE [LARGE SCALE MRNA]</scope>
    <source>
        <strain>C57BL/6J</strain>
        <tissue>Testis</tissue>
        <tissue>Thymus</tissue>
    </source>
</reference>
<reference key="3">
    <citation type="journal article" date="2004" name="Genome Res.">
        <title>The status, quality, and expansion of the NIH full-length cDNA project: the Mammalian Gene Collection (MGC).</title>
        <authorList>
            <consortium name="The MGC Project Team"/>
        </authorList>
    </citation>
    <scope>NUCLEOTIDE SEQUENCE [LARGE SCALE MRNA]</scope>
    <source>
        <strain>C57BL/6J</strain>
        <tissue>Brain</tissue>
    </source>
</reference>
<reference key="4">
    <citation type="journal article" date="2003" name="Mol. Cell. Biol.">
        <title>Identification of homeodomain proteins, PBX1 and PREP1, involved in the transcription of murine leukemia virus.</title>
        <authorList>
            <person name="Chao S.H."/>
            <person name="Walker J.R."/>
            <person name="Chanda S.K."/>
            <person name="Gray N.S."/>
            <person name="Caldwell J.S."/>
        </authorList>
    </citation>
    <scope>FUNCTION (MICROBIAL INFECTION)</scope>
</reference>
<reference key="5">
    <citation type="journal article" date="2010" name="Cell">
        <title>A tissue-specific atlas of mouse protein phosphorylation and expression.</title>
        <authorList>
            <person name="Huttlin E.L."/>
            <person name="Jedrychowski M.P."/>
            <person name="Elias J.E."/>
            <person name="Goswami T."/>
            <person name="Rad R."/>
            <person name="Beausoleil S.A."/>
            <person name="Villen J."/>
            <person name="Haas W."/>
            <person name="Sowa M.E."/>
            <person name="Gygi S.P."/>
        </authorList>
    </citation>
    <scope>PHOSPHORYLATION [LARGE SCALE ANALYSIS] AT SER-33</scope>
    <scope>IDENTIFICATION BY MASS SPECTROMETRY [LARGE SCALE ANALYSIS]</scope>
    <source>
        <tissue>Kidney</tissue>
        <tissue>Lung</tissue>
    </source>
</reference>
<reference key="6">
    <citation type="journal article" date="2018" name="FEBS Lett.">
        <title>The O-GlcNAc transferase OGT interacts with and post-translationally modifies the transcription factor HOXA1.</title>
        <authorList>
            <person name="Draime A."/>
            <person name="Bridoux L."/>
            <person name="Belpaire M."/>
            <person name="Pringels T."/>
            <person name="Degand H."/>
            <person name="Morsomme P."/>
            <person name="Rezsohazy R."/>
        </authorList>
    </citation>
    <scope>FUNCTION</scope>
</reference>